<keyword id="KW-0963">Cytoplasm</keyword>
<keyword id="KW-0342">GTP-binding</keyword>
<keyword id="KW-0378">Hydrolase</keyword>
<keyword id="KW-0460">Magnesium</keyword>
<keyword id="KW-0479">Metal-binding</keyword>
<keyword id="KW-0547">Nucleotide-binding</keyword>
<keyword id="KW-0630">Potassium</keyword>
<keyword id="KW-0819">tRNA processing</keyword>
<accession>A4Y199</accession>
<evidence type="ECO:0000255" key="1">
    <source>
        <dbReference type="HAMAP-Rule" id="MF_00379"/>
    </source>
</evidence>
<dbReference type="EC" id="3.6.-.-" evidence="1"/>
<dbReference type="EMBL" id="CP000680">
    <property type="protein sequence ID" value="ABP87365.1"/>
    <property type="molecule type" value="Genomic_DNA"/>
</dbReference>
<dbReference type="SMR" id="A4Y199"/>
<dbReference type="STRING" id="399739.Pmen_4619"/>
<dbReference type="KEGG" id="pmy:Pmen_4619"/>
<dbReference type="PATRIC" id="fig|399739.8.peg.4684"/>
<dbReference type="eggNOG" id="COG0486">
    <property type="taxonomic scope" value="Bacteria"/>
</dbReference>
<dbReference type="HOGENOM" id="CLU_019624_4_1_6"/>
<dbReference type="OrthoDB" id="9805918at2"/>
<dbReference type="GO" id="GO:0005829">
    <property type="term" value="C:cytosol"/>
    <property type="evidence" value="ECO:0007669"/>
    <property type="project" value="TreeGrafter"/>
</dbReference>
<dbReference type="GO" id="GO:0005525">
    <property type="term" value="F:GTP binding"/>
    <property type="evidence" value="ECO:0007669"/>
    <property type="project" value="UniProtKB-UniRule"/>
</dbReference>
<dbReference type="GO" id="GO:0003924">
    <property type="term" value="F:GTPase activity"/>
    <property type="evidence" value="ECO:0007669"/>
    <property type="project" value="UniProtKB-UniRule"/>
</dbReference>
<dbReference type="GO" id="GO:0046872">
    <property type="term" value="F:metal ion binding"/>
    <property type="evidence" value="ECO:0007669"/>
    <property type="project" value="UniProtKB-KW"/>
</dbReference>
<dbReference type="GO" id="GO:0030488">
    <property type="term" value="P:tRNA methylation"/>
    <property type="evidence" value="ECO:0007669"/>
    <property type="project" value="TreeGrafter"/>
</dbReference>
<dbReference type="GO" id="GO:0002098">
    <property type="term" value="P:tRNA wobble uridine modification"/>
    <property type="evidence" value="ECO:0007669"/>
    <property type="project" value="TreeGrafter"/>
</dbReference>
<dbReference type="CDD" id="cd04164">
    <property type="entry name" value="trmE"/>
    <property type="match status" value="1"/>
</dbReference>
<dbReference type="CDD" id="cd14858">
    <property type="entry name" value="TrmE_N"/>
    <property type="match status" value="1"/>
</dbReference>
<dbReference type="FunFam" id="3.40.50.300:FF:000249">
    <property type="entry name" value="tRNA modification GTPase MnmE"/>
    <property type="match status" value="1"/>
</dbReference>
<dbReference type="Gene3D" id="3.40.50.300">
    <property type="entry name" value="P-loop containing nucleotide triphosphate hydrolases"/>
    <property type="match status" value="1"/>
</dbReference>
<dbReference type="Gene3D" id="3.30.1360.120">
    <property type="entry name" value="Probable tRNA modification gtpase trme, domain 1"/>
    <property type="match status" value="1"/>
</dbReference>
<dbReference type="Gene3D" id="1.20.120.430">
    <property type="entry name" value="tRNA modification GTPase MnmE domain 2"/>
    <property type="match status" value="1"/>
</dbReference>
<dbReference type="HAMAP" id="MF_00379">
    <property type="entry name" value="GTPase_MnmE"/>
    <property type="match status" value="1"/>
</dbReference>
<dbReference type="InterPro" id="IPR031168">
    <property type="entry name" value="G_TrmE"/>
</dbReference>
<dbReference type="InterPro" id="IPR006073">
    <property type="entry name" value="GTP-bd"/>
</dbReference>
<dbReference type="InterPro" id="IPR018948">
    <property type="entry name" value="GTP-bd_TrmE_N"/>
</dbReference>
<dbReference type="InterPro" id="IPR004520">
    <property type="entry name" value="GTPase_MnmE"/>
</dbReference>
<dbReference type="InterPro" id="IPR027368">
    <property type="entry name" value="MnmE_dom2"/>
</dbReference>
<dbReference type="InterPro" id="IPR025867">
    <property type="entry name" value="MnmE_helical"/>
</dbReference>
<dbReference type="InterPro" id="IPR027417">
    <property type="entry name" value="P-loop_NTPase"/>
</dbReference>
<dbReference type="InterPro" id="IPR005225">
    <property type="entry name" value="Small_GTP-bd"/>
</dbReference>
<dbReference type="InterPro" id="IPR027266">
    <property type="entry name" value="TrmE/GcvT_dom1"/>
</dbReference>
<dbReference type="NCBIfam" id="TIGR00450">
    <property type="entry name" value="mnmE_trmE_thdF"/>
    <property type="match status" value="1"/>
</dbReference>
<dbReference type="NCBIfam" id="NF003661">
    <property type="entry name" value="PRK05291.1-3"/>
    <property type="match status" value="1"/>
</dbReference>
<dbReference type="NCBIfam" id="TIGR00231">
    <property type="entry name" value="small_GTP"/>
    <property type="match status" value="1"/>
</dbReference>
<dbReference type="PANTHER" id="PTHR42714">
    <property type="entry name" value="TRNA MODIFICATION GTPASE GTPBP3"/>
    <property type="match status" value="1"/>
</dbReference>
<dbReference type="PANTHER" id="PTHR42714:SF2">
    <property type="entry name" value="TRNA MODIFICATION GTPASE GTPBP3, MITOCHONDRIAL"/>
    <property type="match status" value="1"/>
</dbReference>
<dbReference type="Pfam" id="PF01926">
    <property type="entry name" value="MMR_HSR1"/>
    <property type="match status" value="1"/>
</dbReference>
<dbReference type="Pfam" id="PF12631">
    <property type="entry name" value="MnmE_helical"/>
    <property type="match status" value="1"/>
</dbReference>
<dbReference type="Pfam" id="PF10396">
    <property type="entry name" value="TrmE_N"/>
    <property type="match status" value="1"/>
</dbReference>
<dbReference type="PRINTS" id="PR00326">
    <property type="entry name" value="GTP1OBG"/>
</dbReference>
<dbReference type="SUPFAM" id="SSF52540">
    <property type="entry name" value="P-loop containing nucleoside triphosphate hydrolases"/>
    <property type="match status" value="1"/>
</dbReference>
<dbReference type="SUPFAM" id="SSF116878">
    <property type="entry name" value="TrmE connector domain"/>
    <property type="match status" value="1"/>
</dbReference>
<dbReference type="PROSITE" id="PS51709">
    <property type="entry name" value="G_TRME"/>
    <property type="match status" value="1"/>
</dbReference>
<gene>
    <name evidence="1" type="primary">mnmE</name>
    <name evidence="1" type="synonym">trmE</name>
    <name type="ordered locus">Pmen_4619</name>
</gene>
<organism>
    <name type="scientific">Ectopseudomonas mendocina (strain ymp)</name>
    <name type="common">Pseudomonas mendocina</name>
    <dbReference type="NCBI Taxonomy" id="399739"/>
    <lineage>
        <taxon>Bacteria</taxon>
        <taxon>Pseudomonadati</taxon>
        <taxon>Pseudomonadota</taxon>
        <taxon>Gammaproteobacteria</taxon>
        <taxon>Pseudomonadales</taxon>
        <taxon>Pseudomonadaceae</taxon>
        <taxon>Ectopseudomonas</taxon>
    </lineage>
</organism>
<sequence>MNHARDTIAAVATAQGRGGVGIVRVSGPLSGQLAQAICRRELKPRFAHHGPFYGEQELPLDEGLAIYFPGPNSFTGEDVLELQGHGGPVVLDLLLRRCLELGARLARPGEFSERAFLNDKLDLAQAEAIADLIEASSEQAARNALRSLQGEFSKRVHALTESLIQLRIYVEAAIDFPEEEIDFLADGHVLSQLDGVRADLSTVLREAGQGALLRDGMTVVIAGRPNAGKSSLLNALAGREAAIVTDIAGTTRDVLREHIHIDGMPLHVVDTAGLRDTDDQVERIGVERALKAIGEADRVLLVVDSTAPEAADPFALWPEFLEQRPDPARVTLIRNKADLSGEAVTLQTSADGHVTLSLSAKSADGLELLREHLKACMGYQQTAESGFSARRRHLEALHQAEQYLEHGRNQLTLMGAGELLAEDLRMAQQALGEITGAFSSDDLLGRIFSSFCIGK</sequence>
<feature type="chain" id="PRO_1000048857" description="tRNA modification GTPase MnmE">
    <location>
        <begin position="1"/>
        <end position="455"/>
    </location>
</feature>
<feature type="domain" description="TrmE-type G">
    <location>
        <begin position="216"/>
        <end position="378"/>
    </location>
</feature>
<feature type="binding site" evidence="1">
    <location>
        <position position="24"/>
    </location>
    <ligand>
        <name>(6S)-5-formyl-5,6,7,8-tetrahydrofolate</name>
        <dbReference type="ChEBI" id="CHEBI:57457"/>
    </ligand>
</feature>
<feature type="binding site" evidence="1">
    <location>
        <position position="81"/>
    </location>
    <ligand>
        <name>(6S)-5-formyl-5,6,7,8-tetrahydrofolate</name>
        <dbReference type="ChEBI" id="CHEBI:57457"/>
    </ligand>
</feature>
<feature type="binding site" evidence="1">
    <location>
        <position position="120"/>
    </location>
    <ligand>
        <name>(6S)-5-formyl-5,6,7,8-tetrahydrofolate</name>
        <dbReference type="ChEBI" id="CHEBI:57457"/>
    </ligand>
</feature>
<feature type="binding site" evidence="1">
    <location>
        <begin position="226"/>
        <end position="231"/>
    </location>
    <ligand>
        <name>GTP</name>
        <dbReference type="ChEBI" id="CHEBI:37565"/>
    </ligand>
</feature>
<feature type="binding site" evidence="1">
    <location>
        <position position="226"/>
    </location>
    <ligand>
        <name>K(+)</name>
        <dbReference type="ChEBI" id="CHEBI:29103"/>
    </ligand>
</feature>
<feature type="binding site" evidence="1">
    <location>
        <position position="230"/>
    </location>
    <ligand>
        <name>Mg(2+)</name>
        <dbReference type="ChEBI" id="CHEBI:18420"/>
    </ligand>
</feature>
<feature type="binding site" evidence="1">
    <location>
        <begin position="245"/>
        <end position="251"/>
    </location>
    <ligand>
        <name>GTP</name>
        <dbReference type="ChEBI" id="CHEBI:37565"/>
    </ligand>
</feature>
<feature type="binding site" evidence="1">
    <location>
        <position position="245"/>
    </location>
    <ligand>
        <name>K(+)</name>
        <dbReference type="ChEBI" id="CHEBI:29103"/>
    </ligand>
</feature>
<feature type="binding site" evidence="1">
    <location>
        <position position="247"/>
    </location>
    <ligand>
        <name>K(+)</name>
        <dbReference type="ChEBI" id="CHEBI:29103"/>
    </ligand>
</feature>
<feature type="binding site" evidence="1">
    <location>
        <position position="250"/>
    </location>
    <ligand>
        <name>K(+)</name>
        <dbReference type="ChEBI" id="CHEBI:29103"/>
    </ligand>
</feature>
<feature type="binding site" evidence="1">
    <location>
        <position position="251"/>
    </location>
    <ligand>
        <name>Mg(2+)</name>
        <dbReference type="ChEBI" id="CHEBI:18420"/>
    </ligand>
</feature>
<feature type="binding site" evidence="1">
    <location>
        <begin position="270"/>
        <end position="273"/>
    </location>
    <ligand>
        <name>GTP</name>
        <dbReference type="ChEBI" id="CHEBI:37565"/>
    </ligand>
</feature>
<feature type="binding site" evidence="1">
    <location>
        <begin position="335"/>
        <end position="338"/>
    </location>
    <ligand>
        <name>GTP</name>
        <dbReference type="ChEBI" id="CHEBI:37565"/>
    </ligand>
</feature>
<feature type="binding site" evidence="1">
    <location>
        <position position="455"/>
    </location>
    <ligand>
        <name>(6S)-5-formyl-5,6,7,8-tetrahydrofolate</name>
        <dbReference type="ChEBI" id="CHEBI:57457"/>
    </ligand>
</feature>
<name>MNME_ECTM1</name>
<protein>
    <recommendedName>
        <fullName evidence="1">tRNA modification GTPase MnmE</fullName>
        <ecNumber evidence="1">3.6.-.-</ecNumber>
    </recommendedName>
</protein>
<proteinExistence type="inferred from homology"/>
<reference key="1">
    <citation type="submission" date="2007-04" db="EMBL/GenBank/DDBJ databases">
        <title>Complete sequence of Pseudomonas mendocina ymp.</title>
        <authorList>
            <consortium name="US DOE Joint Genome Institute"/>
            <person name="Copeland A."/>
            <person name="Lucas S."/>
            <person name="Lapidus A."/>
            <person name="Barry K."/>
            <person name="Glavina del Rio T."/>
            <person name="Dalin E."/>
            <person name="Tice H."/>
            <person name="Pitluck S."/>
            <person name="Kiss H."/>
            <person name="Brettin T."/>
            <person name="Detter J.C."/>
            <person name="Bruce D."/>
            <person name="Han C."/>
            <person name="Schmutz J."/>
            <person name="Larimer F."/>
            <person name="Land M."/>
            <person name="Hauser L."/>
            <person name="Kyrpides N."/>
            <person name="Mikhailova N."/>
            <person name="Hersman L."/>
            <person name="Dubois J."/>
            <person name="Maurice P."/>
            <person name="Richardson P."/>
        </authorList>
    </citation>
    <scope>NUCLEOTIDE SEQUENCE [LARGE SCALE GENOMIC DNA]</scope>
    <source>
        <strain>ymp</strain>
    </source>
</reference>
<comment type="function">
    <text evidence="1">Exhibits a very high intrinsic GTPase hydrolysis rate. Involved in the addition of a carboxymethylaminomethyl (cmnm) group at the wobble position (U34) of certain tRNAs, forming tRNA-cmnm(5)s(2)U34.</text>
</comment>
<comment type="cofactor">
    <cofactor evidence="1">
        <name>K(+)</name>
        <dbReference type="ChEBI" id="CHEBI:29103"/>
    </cofactor>
    <text evidence="1">Binds 1 potassium ion per subunit.</text>
</comment>
<comment type="subunit">
    <text evidence="1">Homodimer. Heterotetramer of two MnmE and two MnmG subunits.</text>
</comment>
<comment type="subcellular location">
    <subcellularLocation>
        <location evidence="1">Cytoplasm</location>
    </subcellularLocation>
</comment>
<comment type="similarity">
    <text evidence="1">Belongs to the TRAFAC class TrmE-Era-EngA-EngB-Septin-like GTPase superfamily. TrmE GTPase family.</text>
</comment>